<feature type="chain" id="PRO_1000015820" description="Glutamyl-tRNA(Gln) amidotransferase subunit A">
    <location>
        <begin position="1"/>
        <end position="476"/>
    </location>
</feature>
<feature type="active site" description="Charge relay system" evidence="1">
    <location>
        <position position="76"/>
    </location>
</feature>
<feature type="active site" description="Charge relay system" evidence="1">
    <location>
        <position position="151"/>
    </location>
</feature>
<feature type="active site" description="Acyl-ester intermediate" evidence="1">
    <location>
        <position position="175"/>
    </location>
</feature>
<reference key="1">
    <citation type="submission" date="2006-12" db="EMBL/GenBank/DDBJ databases">
        <title>Complete sequence of Chlorobium phaeobacteroides DSM 266.</title>
        <authorList>
            <consortium name="US DOE Joint Genome Institute"/>
            <person name="Copeland A."/>
            <person name="Lucas S."/>
            <person name="Lapidus A."/>
            <person name="Barry K."/>
            <person name="Detter J.C."/>
            <person name="Glavina del Rio T."/>
            <person name="Hammon N."/>
            <person name="Israni S."/>
            <person name="Pitluck S."/>
            <person name="Goltsman E."/>
            <person name="Schmutz J."/>
            <person name="Larimer F."/>
            <person name="Land M."/>
            <person name="Hauser L."/>
            <person name="Mikhailova N."/>
            <person name="Li T."/>
            <person name="Overmann J."/>
            <person name="Bryant D.A."/>
            <person name="Richardson P."/>
        </authorList>
    </citation>
    <scope>NUCLEOTIDE SEQUENCE [LARGE SCALE GENOMIC DNA]</scope>
    <source>
        <strain>DSM 266 / SMG 266 / 2430</strain>
    </source>
</reference>
<evidence type="ECO:0000255" key="1">
    <source>
        <dbReference type="HAMAP-Rule" id="MF_00120"/>
    </source>
</evidence>
<proteinExistence type="inferred from homology"/>
<comment type="function">
    <text evidence="1">Allows the formation of correctly charged Gln-tRNA(Gln) through the transamidation of misacylated Glu-tRNA(Gln) in organisms which lack glutaminyl-tRNA synthetase. The reaction takes place in the presence of glutamine and ATP through an activated gamma-phospho-Glu-tRNA(Gln).</text>
</comment>
<comment type="catalytic activity">
    <reaction evidence="1">
        <text>L-glutamyl-tRNA(Gln) + L-glutamine + ATP + H2O = L-glutaminyl-tRNA(Gln) + L-glutamate + ADP + phosphate + H(+)</text>
        <dbReference type="Rhea" id="RHEA:17521"/>
        <dbReference type="Rhea" id="RHEA-COMP:9681"/>
        <dbReference type="Rhea" id="RHEA-COMP:9684"/>
        <dbReference type="ChEBI" id="CHEBI:15377"/>
        <dbReference type="ChEBI" id="CHEBI:15378"/>
        <dbReference type="ChEBI" id="CHEBI:29985"/>
        <dbReference type="ChEBI" id="CHEBI:30616"/>
        <dbReference type="ChEBI" id="CHEBI:43474"/>
        <dbReference type="ChEBI" id="CHEBI:58359"/>
        <dbReference type="ChEBI" id="CHEBI:78520"/>
        <dbReference type="ChEBI" id="CHEBI:78521"/>
        <dbReference type="ChEBI" id="CHEBI:456216"/>
        <dbReference type="EC" id="6.3.5.7"/>
    </reaction>
</comment>
<comment type="subunit">
    <text evidence="1">Heterotrimer of A, B and C subunits.</text>
</comment>
<comment type="similarity">
    <text evidence="1">Belongs to the amidase family. GatA subfamily.</text>
</comment>
<keyword id="KW-0067">ATP-binding</keyword>
<keyword id="KW-0436">Ligase</keyword>
<keyword id="KW-0547">Nucleotide-binding</keyword>
<keyword id="KW-0648">Protein biosynthesis</keyword>
<keyword id="KW-1185">Reference proteome</keyword>
<dbReference type="EC" id="6.3.5.7" evidence="1"/>
<dbReference type="EMBL" id="CP000492">
    <property type="protein sequence ID" value="ABL64458.1"/>
    <property type="molecule type" value="Genomic_DNA"/>
</dbReference>
<dbReference type="RefSeq" id="WP_011744291.1">
    <property type="nucleotide sequence ID" value="NC_008639.1"/>
</dbReference>
<dbReference type="SMR" id="A1BDI1"/>
<dbReference type="STRING" id="290317.Cpha266_0399"/>
<dbReference type="KEGG" id="cph:Cpha266_0399"/>
<dbReference type="eggNOG" id="COG0154">
    <property type="taxonomic scope" value="Bacteria"/>
</dbReference>
<dbReference type="HOGENOM" id="CLU_009600_0_3_10"/>
<dbReference type="OrthoDB" id="9811471at2"/>
<dbReference type="Proteomes" id="UP000008701">
    <property type="component" value="Chromosome"/>
</dbReference>
<dbReference type="GO" id="GO:0030956">
    <property type="term" value="C:glutamyl-tRNA(Gln) amidotransferase complex"/>
    <property type="evidence" value="ECO:0007669"/>
    <property type="project" value="InterPro"/>
</dbReference>
<dbReference type="GO" id="GO:0005524">
    <property type="term" value="F:ATP binding"/>
    <property type="evidence" value="ECO:0007669"/>
    <property type="project" value="UniProtKB-KW"/>
</dbReference>
<dbReference type="GO" id="GO:0050567">
    <property type="term" value="F:glutaminyl-tRNA synthase (glutamine-hydrolyzing) activity"/>
    <property type="evidence" value="ECO:0007669"/>
    <property type="project" value="UniProtKB-UniRule"/>
</dbReference>
<dbReference type="GO" id="GO:0006412">
    <property type="term" value="P:translation"/>
    <property type="evidence" value="ECO:0007669"/>
    <property type="project" value="UniProtKB-UniRule"/>
</dbReference>
<dbReference type="Gene3D" id="3.90.1300.10">
    <property type="entry name" value="Amidase signature (AS) domain"/>
    <property type="match status" value="1"/>
</dbReference>
<dbReference type="HAMAP" id="MF_00120">
    <property type="entry name" value="GatA"/>
    <property type="match status" value="1"/>
</dbReference>
<dbReference type="InterPro" id="IPR000120">
    <property type="entry name" value="Amidase"/>
</dbReference>
<dbReference type="InterPro" id="IPR020556">
    <property type="entry name" value="Amidase_CS"/>
</dbReference>
<dbReference type="InterPro" id="IPR023631">
    <property type="entry name" value="Amidase_dom"/>
</dbReference>
<dbReference type="InterPro" id="IPR036928">
    <property type="entry name" value="AS_sf"/>
</dbReference>
<dbReference type="InterPro" id="IPR004412">
    <property type="entry name" value="GatA"/>
</dbReference>
<dbReference type="NCBIfam" id="TIGR00132">
    <property type="entry name" value="gatA"/>
    <property type="match status" value="1"/>
</dbReference>
<dbReference type="PANTHER" id="PTHR11895:SF151">
    <property type="entry name" value="GLUTAMYL-TRNA(GLN) AMIDOTRANSFERASE SUBUNIT A"/>
    <property type="match status" value="1"/>
</dbReference>
<dbReference type="PANTHER" id="PTHR11895">
    <property type="entry name" value="TRANSAMIDASE"/>
    <property type="match status" value="1"/>
</dbReference>
<dbReference type="Pfam" id="PF01425">
    <property type="entry name" value="Amidase"/>
    <property type="match status" value="1"/>
</dbReference>
<dbReference type="SUPFAM" id="SSF75304">
    <property type="entry name" value="Amidase signature (AS) enzymes"/>
    <property type="match status" value="1"/>
</dbReference>
<dbReference type="PROSITE" id="PS00571">
    <property type="entry name" value="AMIDASES"/>
    <property type="match status" value="1"/>
</dbReference>
<protein>
    <recommendedName>
        <fullName evidence="1">Glutamyl-tRNA(Gln) amidotransferase subunit A</fullName>
        <shortName evidence="1">Glu-ADT subunit A</shortName>
        <ecNumber evidence="1">6.3.5.7</ecNumber>
    </recommendedName>
</protein>
<name>GATA_CHLPD</name>
<organism>
    <name type="scientific">Chlorobium phaeobacteroides (strain DSM 266 / SMG 266 / 2430)</name>
    <dbReference type="NCBI Taxonomy" id="290317"/>
    <lineage>
        <taxon>Bacteria</taxon>
        <taxon>Pseudomonadati</taxon>
        <taxon>Chlorobiota</taxon>
        <taxon>Chlorobiia</taxon>
        <taxon>Chlorobiales</taxon>
        <taxon>Chlorobiaceae</taxon>
        <taxon>Chlorobium/Pelodictyon group</taxon>
        <taxon>Chlorobium</taxon>
    </lineage>
</organism>
<accession>A1BDI1</accession>
<sequence>MHFSSYQDLRSSLLAGQTTCEEVTKSYLERIDRHCDDNIFLAVFHEQALSRARSLDRRFSEGGTPGLLFGMPMAIKDNISIKGARLTCASRILENYESVYDATVIERLLNEDAVFIGKTNMDEFAMGSSNENSAFGPVANPFDKTRVPGGSSGGSAAAVAAGLALVALGSDTGGSVRQPAGFCDIVGLKPTYGRISRYGLVAFASSFDQIGVLARNSDDAALVLGVMAGADERDATSSRHAVSNYAEEMAAVSPDGLKIGVPKEFFHESLNPDVARLVKAKLEELREKGAELVDITLPASDYAIAAYYILVTAEASSNLARFDGARYGYRSPNCDNLSAMYVNSRTEGFGKEVKRRIMLGTYVLSAGYYDTYYKKAQQVRRVFQDRYREALEKVDVIAGPTSPFPPFGIGDKMDDPLEMYLADVFTVPASIVGMPAISVPIGYDSLNLPVGMHLICNFFEEGKLLGIAGLMQHSIV</sequence>
<gene>
    <name evidence="1" type="primary">gatA</name>
    <name type="ordered locus">Cpha266_0399</name>
</gene>